<evidence type="ECO:0000255" key="1">
    <source>
        <dbReference type="HAMAP-Rule" id="MF_00048"/>
    </source>
</evidence>
<comment type="similarity">
    <text evidence="1">Belongs to the UPF0102 family.</text>
</comment>
<accession>A1JR73</accession>
<proteinExistence type="inferred from homology"/>
<name>Y3728_YERE8</name>
<gene>
    <name type="ordered locus">YE3728</name>
</gene>
<dbReference type="EMBL" id="AM286415">
    <property type="protein sequence ID" value="CAL13754.1"/>
    <property type="molecule type" value="Genomic_DNA"/>
</dbReference>
<dbReference type="RefSeq" id="WP_005174223.1">
    <property type="nucleotide sequence ID" value="NC_008800.1"/>
</dbReference>
<dbReference type="RefSeq" id="YP_001007882.1">
    <property type="nucleotide sequence ID" value="NC_008800.1"/>
</dbReference>
<dbReference type="SMR" id="A1JR73"/>
<dbReference type="KEGG" id="yen:YE3728"/>
<dbReference type="PATRIC" id="fig|393305.7.peg.3970"/>
<dbReference type="eggNOG" id="COG0792">
    <property type="taxonomic scope" value="Bacteria"/>
</dbReference>
<dbReference type="HOGENOM" id="CLU_115353_1_0_6"/>
<dbReference type="OrthoDB" id="9794876at2"/>
<dbReference type="Proteomes" id="UP000000642">
    <property type="component" value="Chromosome"/>
</dbReference>
<dbReference type="GO" id="GO:0003676">
    <property type="term" value="F:nucleic acid binding"/>
    <property type="evidence" value="ECO:0007669"/>
    <property type="project" value="InterPro"/>
</dbReference>
<dbReference type="CDD" id="cd20736">
    <property type="entry name" value="PoNe_Nuclease"/>
    <property type="match status" value="1"/>
</dbReference>
<dbReference type="Gene3D" id="3.40.1350.10">
    <property type="match status" value="1"/>
</dbReference>
<dbReference type="HAMAP" id="MF_00048">
    <property type="entry name" value="UPF0102"/>
    <property type="match status" value="1"/>
</dbReference>
<dbReference type="InterPro" id="IPR011335">
    <property type="entry name" value="Restrct_endonuc-II-like"/>
</dbReference>
<dbReference type="InterPro" id="IPR011856">
    <property type="entry name" value="tRNA_endonuc-like_dom_sf"/>
</dbReference>
<dbReference type="InterPro" id="IPR003509">
    <property type="entry name" value="UPF0102_YraN-like"/>
</dbReference>
<dbReference type="NCBIfam" id="NF009150">
    <property type="entry name" value="PRK12497.1-3"/>
    <property type="match status" value="1"/>
</dbReference>
<dbReference type="NCBIfam" id="TIGR00252">
    <property type="entry name" value="YraN family protein"/>
    <property type="match status" value="1"/>
</dbReference>
<dbReference type="PANTHER" id="PTHR34039">
    <property type="entry name" value="UPF0102 PROTEIN YRAN"/>
    <property type="match status" value="1"/>
</dbReference>
<dbReference type="PANTHER" id="PTHR34039:SF1">
    <property type="entry name" value="UPF0102 PROTEIN YRAN"/>
    <property type="match status" value="1"/>
</dbReference>
<dbReference type="Pfam" id="PF02021">
    <property type="entry name" value="UPF0102"/>
    <property type="match status" value="1"/>
</dbReference>
<dbReference type="SUPFAM" id="SSF52980">
    <property type="entry name" value="Restriction endonuclease-like"/>
    <property type="match status" value="1"/>
</dbReference>
<organism>
    <name type="scientific">Yersinia enterocolitica serotype O:8 / biotype 1B (strain NCTC 13174 / 8081)</name>
    <dbReference type="NCBI Taxonomy" id="393305"/>
    <lineage>
        <taxon>Bacteria</taxon>
        <taxon>Pseudomonadati</taxon>
        <taxon>Pseudomonadota</taxon>
        <taxon>Gammaproteobacteria</taxon>
        <taxon>Enterobacterales</taxon>
        <taxon>Yersiniaceae</taxon>
        <taxon>Yersinia</taxon>
    </lineage>
</organism>
<sequence>MSHRDTGTHYENQARHYLERAGLVFKAANVTYQNGEIDLIMRDGDTWVFVEVRFRRNALFGGAAASVTYSKQQRLLRAATIWLAQRNACFATTPCRFDVFAITGSELEWLPNAFNAD</sequence>
<reference key="1">
    <citation type="journal article" date="2006" name="PLoS Genet.">
        <title>The complete genome sequence and comparative genome analysis of the high pathogenicity Yersinia enterocolitica strain 8081.</title>
        <authorList>
            <person name="Thomson N.R."/>
            <person name="Howard S."/>
            <person name="Wren B.W."/>
            <person name="Holden M.T.G."/>
            <person name="Crossman L."/>
            <person name="Challis G.L."/>
            <person name="Churcher C."/>
            <person name="Mungall K."/>
            <person name="Brooks K."/>
            <person name="Chillingworth T."/>
            <person name="Feltwell T."/>
            <person name="Abdellah Z."/>
            <person name="Hauser H."/>
            <person name="Jagels K."/>
            <person name="Maddison M."/>
            <person name="Moule S."/>
            <person name="Sanders M."/>
            <person name="Whitehead S."/>
            <person name="Quail M.A."/>
            <person name="Dougan G."/>
            <person name="Parkhill J."/>
            <person name="Prentice M.B."/>
        </authorList>
    </citation>
    <scope>NUCLEOTIDE SEQUENCE [LARGE SCALE GENOMIC DNA]</scope>
    <source>
        <strain>NCTC 13174 / 8081</strain>
    </source>
</reference>
<protein>
    <recommendedName>
        <fullName evidence="1">UPF0102 protein YE3728</fullName>
    </recommendedName>
</protein>
<feature type="chain" id="PRO_1000009279" description="UPF0102 protein YE3728">
    <location>
        <begin position="1"/>
        <end position="117"/>
    </location>
</feature>